<protein>
    <recommendedName>
        <fullName evidence="1">Endonuclease MutS2</fullName>
        <ecNumber evidence="1">3.1.-.-</ecNumber>
    </recommendedName>
    <alternativeName>
        <fullName evidence="1">Ribosome-associated protein quality control-upstream factor</fullName>
        <shortName evidence="1">RQC-upstream factor</shortName>
        <shortName evidence="1">RqcU</shortName>
        <ecNumber evidence="1">3.6.4.-</ecNumber>
    </alternativeName>
</protein>
<reference key="1">
    <citation type="journal article" date="2006" name="Proc. Natl. Acad. Sci. U.S.A.">
        <title>Comparative genomics of the lactic acid bacteria.</title>
        <authorList>
            <person name="Makarova K.S."/>
            <person name="Slesarev A."/>
            <person name="Wolf Y.I."/>
            <person name="Sorokin A."/>
            <person name="Mirkin B."/>
            <person name="Koonin E.V."/>
            <person name="Pavlov A."/>
            <person name="Pavlova N."/>
            <person name="Karamychev V."/>
            <person name="Polouchine N."/>
            <person name="Shakhova V."/>
            <person name="Grigoriev I."/>
            <person name="Lou Y."/>
            <person name="Rohksar D."/>
            <person name="Lucas S."/>
            <person name="Huang K."/>
            <person name="Goodstein D.M."/>
            <person name="Hawkins T."/>
            <person name="Plengvidhya V."/>
            <person name="Welker D."/>
            <person name="Hughes J."/>
            <person name="Goh Y."/>
            <person name="Benson A."/>
            <person name="Baldwin K."/>
            <person name="Lee J.-H."/>
            <person name="Diaz-Muniz I."/>
            <person name="Dosti B."/>
            <person name="Smeianov V."/>
            <person name="Wechter W."/>
            <person name="Barabote R."/>
            <person name="Lorca G."/>
            <person name="Altermann E."/>
            <person name="Barrangou R."/>
            <person name="Ganesan B."/>
            <person name="Xie Y."/>
            <person name="Rawsthorne H."/>
            <person name="Tamir D."/>
            <person name="Parker C."/>
            <person name="Breidt F."/>
            <person name="Broadbent J.R."/>
            <person name="Hutkins R."/>
            <person name="O'Sullivan D."/>
            <person name="Steele J."/>
            <person name="Unlu G."/>
            <person name="Saier M.H. Jr."/>
            <person name="Klaenhammer T."/>
            <person name="Richardson P."/>
            <person name="Kozyavkin S."/>
            <person name="Weimer B.C."/>
            <person name="Mills D.A."/>
        </authorList>
    </citation>
    <scope>NUCLEOTIDE SEQUENCE [LARGE SCALE GENOMIC DNA]</scope>
    <source>
        <strain>ATCC 25745 / CCUG 21536 / LMG 10740 / 183-1w</strain>
    </source>
</reference>
<comment type="function">
    <text evidence="1">Endonuclease that is involved in the suppression of homologous recombination and thus may have a key role in the control of bacterial genetic diversity.</text>
</comment>
<comment type="function">
    <text evidence="1">Acts as a ribosome collision sensor, splitting the ribosome into its 2 subunits. Detects stalled/collided 70S ribosomes which it binds and splits by an ATP-hydrolysis driven conformational change. Acts upstream of the ribosome quality control system (RQC), a ribosome-associated complex that mediates the extraction of incompletely synthesized nascent chains from stalled ribosomes and their subsequent degradation. Probably generates substrates for RQC.</text>
</comment>
<comment type="subunit">
    <text evidence="1">Homodimer. Binds to stalled ribosomes, contacting rRNA.</text>
</comment>
<comment type="similarity">
    <text evidence="1">Belongs to the DNA mismatch repair MutS family. MutS2 subfamily.</text>
</comment>
<accession>Q03ES2</accession>
<name>MUTS2_PEDPA</name>
<dbReference type="EC" id="3.1.-.-" evidence="1"/>
<dbReference type="EC" id="3.6.4.-" evidence="1"/>
<dbReference type="EMBL" id="CP000422">
    <property type="protein sequence ID" value="ABJ68300.1"/>
    <property type="molecule type" value="Genomic_DNA"/>
</dbReference>
<dbReference type="RefSeq" id="WP_011673576.1">
    <property type="nucleotide sequence ID" value="NC_008525.1"/>
</dbReference>
<dbReference type="SMR" id="Q03ES2"/>
<dbReference type="STRING" id="278197.PEPE_1259"/>
<dbReference type="GeneID" id="33061803"/>
<dbReference type="KEGG" id="ppe:PEPE_1259"/>
<dbReference type="eggNOG" id="COG1193">
    <property type="taxonomic scope" value="Bacteria"/>
</dbReference>
<dbReference type="HOGENOM" id="CLU_011252_2_1_9"/>
<dbReference type="OrthoDB" id="9808166at2"/>
<dbReference type="Proteomes" id="UP000000773">
    <property type="component" value="Chromosome"/>
</dbReference>
<dbReference type="GO" id="GO:0005524">
    <property type="term" value="F:ATP binding"/>
    <property type="evidence" value="ECO:0007669"/>
    <property type="project" value="UniProtKB-UniRule"/>
</dbReference>
<dbReference type="GO" id="GO:0016887">
    <property type="term" value="F:ATP hydrolysis activity"/>
    <property type="evidence" value="ECO:0007669"/>
    <property type="project" value="InterPro"/>
</dbReference>
<dbReference type="GO" id="GO:0140664">
    <property type="term" value="F:ATP-dependent DNA damage sensor activity"/>
    <property type="evidence" value="ECO:0007669"/>
    <property type="project" value="InterPro"/>
</dbReference>
<dbReference type="GO" id="GO:0004519">
    <property type="term" value="F:endonuclease activity"/>
    <property type="evidence" value="ECO:0007669"/>
    <property type="project" value="UniProtKB-UniRule"/>
</dbReference>
<dbReference type="GO" id="GO:0030983">
    <property type="term" value="F:mismatched DNA binding"/>
    <property type="evidence" value="ECO:0007669"/>
    <property type="project" value="InterPro"/>
</dbReference>
<dbReference type="GO" id="GO:0043023">
    <property type="term" value="F:ribosomal large subunit binding"/>
    <property type="evidence" value="ECO:0007669"/>
    <property type="project" value="UniProtKB-UniRule"/>
</dbReference>
<dbReference type="GO" id="GO:0019843">
    <property type="term" value="F:rRNA binding"/>
    <property type="evidence" value="ECO:0007669"/>
    <property type="project" value="UniProtKB-UniRule"/>
</dbReference>
<dbReference type="GO" id="GO:0006298">
    <property type="term" value="P:mismatch repair"/>
    <property type="evidence" value="ECO:0007669"/>
    <property type="project" value="InterPro"/>
</dbReference>
<dbReference type="GO" id="GO:0045910">
    <property type="term" value="P:negative regulation of DNA recombination"/>
    <property type="evidence" value="ECO:0007669"/>
    <property type="project" value="InterPro"/>
</dbReference>
<dbReference type="GO" id="GO:0072344">
    <property type="term" value="P:rescue of stalled ribosome"/>
    <property type="evidence" value="ECO:0007669"/>
    <property type="project" value="UniProtKB-UniRule"/>
</dbReference>
<dbReference type="CDD" id="cd03280">
    <property type="entry name" value="ABC_MutS2"/>
    <property type="match status" value="1"/>
</dbReference>
<dbReference type="FunFam" id="3.40.50.300:FF:000830">
    <property type="entry name" value="Endonuclease MutS2"/>
    <property type="match status" value="1"/>
</dbReference>
<dbReference type="Gene3D" id="3.30.1370.110">
    <property type="match status" value="1"/>
</dbReference>
<dbReference type="Gene3D" id="3.40.50.300">
    <property type="entry name" value="P-loop containing nucleotide triphosphate hydrolases"/>
    <property type="match status" value="1"/>
</dbReference>
<dbReference type="HAMAP" id="MF_00092">
    <property type="entry name" value="MutS2"/>
    <property type="match status" value="1"/>
</dbReference>
<dbReference type="InterPro" id="IPR000432">
    <property type="entry name" value="DNA_mismatch_repair_MutS_C"/>
</dbReference>
<dbReference type="InterPro" id="IPR007696">
    <property type="entry name" value="DNA_mismatch_repair_MutS_core"/>
</dbReference>
<dbReference type="InterPro" id="IPR036187">
    <property type="entry name" value="DNA_mismatch_repair_MutS_sf"/>
</dbReference>
<dbReference type="InterPro" id="IPR046893">
    <property type="entry name" value="MSSS"/>
</dbReference>
<dbReference type="InterPro" id="IPR045076">
    <property type="entry name" value="MutS"/>
</dbReference>
<dbReference type="InterPro" id="IPR005747">
    <property type="entry name" value="MutS2"/>
</dbReference>
<dbReference type="InterPro" id="IPR027417">
    <property type="entry name" value="P-loop_NTPase"/>
</dbReference>
<dbReference type="InterPro" id="IPR002625">
    <property type="entry name" value="Smr_dom"/>
</dbReference>
<dbReference type="InterPro" id="IPR036063">
    <property type="entry name" value="Smr_dom_sf"/>
</dbReference>
<dbReference type="NCBIfam" id="TIGR01069">
    <property type="entry name" value="mutS2"/>
    <property type="match status" value="1"/>
</dbReference>
<dbReference type="PANTHER" id="PTHR48466:SF2">
    <property type="entry name" value="OS10G0509000 PROTEIN"/>
    <property type="match status" value="1"/>
</dbReference>
<dbReference type="PANTHER" id="PTHR48466">
    <property type="entry name" value="OS10G0509000 PROTEIN-RELATED"/>
    <property type="match status" value="1"/>
</dbReference>
<dbReference type="Pfam" id="PF20297">
    <property type="entry name" value="MSSS"/>
    <property type="match status" value="1"/>
</dbReference>
<dbReference type="Pfam" id="PF00488">
    <property type="entry name" value="MutS_V"/>
    <property type="match status" value="1"/>
</dbReference>
<dbReference type="Pfam" id="PF01713">
    <property type="entry name" value="Smr"/>
    <property type="match status" value="1"/>
</dbReference>
<dbReference type="PIRSF" id="PIRSF005814">
    <property type="entry name" value="MutS_YshD"/>
    <property type="match status" value="1"/>
</dbReference>
<dbReference type="SMART" id="SM00534">
    <property type="entry name" value="MUTSac"/>
    <property type="match status" value="1"/>
</dbReference>
<dbReference type="SMART" id="SM00533">
    <property type="entry name" value="MUTSd"/>
    <property type="match status" value="1"/>
</dbReference>
<dbReference type="SMART" id="SM00463">
    <property type="entry name" value="SMR"/>
    <property type="match status" value="1"/>
</dbReference>
<dbReference type="SUPFAM" id="SSF48334">
    <property type="entry name" value="DNA repair protein MutS, domain III"/>
    <property type="match status" value="1"/>
</dbReference>
<dbReference type="SUPFAM" id="SSF52540">
    <property type="entry name" value="P-loop containing nucleoside triphosphate hydrolases"/>
    <property type="match status" value="1"/>
</dbReference>
<dbReference type="SUPFAM" id="SSF160443">
    <property type="entry name" value="SMR domain-like"/>
    <property type="match status" value="1"/>
</dbReference>
<dbReference type="PROSITE" id="PS00486">
    <property type="entry name" value="DNA_MISMATCH_REPAIR_2"/>
    <property type="match status" value="1"/>
</dbReference>
<dbReference type="PROSITE" id="PS50828">
    <property type="entry name" value="SMR"/>
    <property type="match status" value="1"/>
</dbReference>
<proteinExistence type="inferred from homology"/>
<gene>
    <name evidence="1" type="primary">mutS2</name>
    <name evidence="1" type="synonym">rqcU</name>
    <name type="ordered locus">PEPE_1259</name>
</gene>
<evidence type="ECO:0000255" key="1">
    <source>
        <dbReference type="HAMAP-Rule" id="MF_00092"/>
    </source>
</evidence>
<keyword id="KW-0067">ATP-binding</keyword>
<keyword id="KW-0238">DNA-binding</keyword>
<keyword id="KW-0255">Endonuclease</keyword>
<keyword id="KW-0378">Hydrolase</keyword>
<keyword id="KW-0540">Nuclease</keyword>
<keyword id="KW-0547">Nucleotide-binding</keyword>
<keyword id="KW-0694">RNA-binding</keyword>
<keyword id="KW-0699">rRNA-binding</keyword>
<organism>
    <name type="scientific">Pediococcus pentosaceus (strain ATCC 25745 / CCUG 21536 / LMG 10740 / 183-1w)</name>
    <dbReference type="NCBI Taxonomy" id="278197"/>
    <lineage>
        <taxon>Bacteria</taxon>
        <taxon>Bacillati</taxon>
        <taxon>Bacillota</taxon>
        <taxon>Bacilli</taxon>
        <taxon>Lactobacillales</taxon>
        <taxon>Lactobacillaceae</taxon>
        <taxon>Pediococcus</taxon>
    </lineage>
</organism>
<feature type="chain" id="PRO_1000093375" description="Endonuclease MutS2">
    <location>
        <begin position="1"/>
        <end position="785"/>
    </location>
</feature>
<feature type="domain" description="Smr" evidence="1">
    <location>
        <begin position="710"/>
        <end position="785"/>
    </location>
</feature>
<feature type="binding site" evidence="1">
    <location>
        <begin position="334"/>
        <end position="341"/>
    </location>
    <ligand>
        <name>ATP</name>
        <dbReference type="ChEBI" id="CHEBI:30616"/>
    </ligand>
</feature>
<sequence>MNKKILDVLEYDKIKQSIRQFIATENGTKELRELVPSSDETEVRNALKQTLDAVNIYRLKNGIPVPRLEDVTEALQRLKIDAALNGQELAQIGRILRATRTVINFFDDLENEEIEIIALDQVIEQLVTIPEVEERLSNSIEGNGHLLNSASSELRRIRASITRIESDVRSRMEKFTRGNNVKYLSEPIVTIRNERYVIPARVEYRSKFGGVVHDQSSSGQTLYVEPESVVDLNNELRQNQVAEVHEEQRILQELSALVAPYTDTLKDNSRILGHLDLLNAKAQYAHQLKATEPQISASNEINLREARHPLIDQKKVVSNDIRLGGEYETLVITGPNTGGKTITLKTVGLLQLMAQSGMFIPANENSTVRIFEEIFADIGDEQSIEQNLSTFSSHMDNTIRILGNLNERSLALFDELGAGTDPKEGAALAIAILDKVRSTGAVSMTTTHYPELKTYGYERMGTINASMEFDVDTLQPTYKLLLGIPGQSNAFEISKRLGLDSDIISQARGLVDQDSQDLNNMIKDLTTRQKRAQKINQQAVELLKQAEEYHQTLVKGVDSLNSQRSNLIESAKEDANRIVNDSQAEADRIIKRLRKLEHSTGSFKENDLIDAKSKINALHQDTNLKRNKVLRRAKEAQKFHENDEVVVLTYGQRGELLRQVDKKHWEVQMGIMKMKVAVDELEKVKPDKTVKRRVHNSVQRTASAGVKTTLDLRGKRYEEALTETDRYIDAALLAGYDEVTIVHGKGTGALRSGITKYLKNNRRIKAFEYAPANAGGNGATIVHFK</sequence>